<reference key="1">
    <citation type="journal article" date="2001" name="Nature">
        <title>Genome sequence and gene compaction of the eukaryote parasite Encephalitozoon cuniculi.</title>
        <authorList>
            <person name="Katinka M.D."/>
            <person name="Duprat S."/>
            <person name="Cornillot E."/>
            <person name="Metenier G."/>
            <person name="Thomarat F."/>
            <person name="Prensier G."/>
            <person name="Barbe V."/>
            <person name="Peyretaillade E."/>
            <person name="Brottier P."/>
            <person name="Wincker P."/>
            <person name="Delbac F."/>
            <person name="El Alaoui H."/>
            <person name="Peyret P."/>
            <person name="Saurin W."/>
            <person name="Gouy M."/>
            <person name="Weissenbach J."/>
            <person name="Vivares C.P."/>
        </authorList>
    </citation>
    <scope>NUCLEOTIDE SEQUENCE [LARGE SCALE GENOMIC DNA]</scope>
    <source>
        <strain>GB-M1</strain>
    </source>
</reference>
<protein>
    <recommendedName>
        <fullName evidence="1">Large ribosomal subunit protein eL31</fullName>
    </recommendedName>
    <alternativeName>
        <fullName>60S ribosomal protein L31</fullName>
    </alternativeName>
</protein>
<evidence type="ECO:0000305" key="1"/>
<feature type="chain" id="PRO_0000153785" description="Large ribosomal subunit protein eL31">
    <location>
        <begin position="1"/>
        <end position="111"/>
    </location>
</feature>
<gene>
    <name type="primary">RPL31</name>
    <name type="ordered locus">ECU03_0230</name>
</gene>
<proteinExistence type="evidence at protein level"/>
<comment type="similarity">
    <text evidence="1">Belongs to the eukaryotic ribosomal protein eL31 family.</text>
</comment>
<dbReference type="EMBL" id="AL590443">
    <property type="protein sequence ID" value="CAD26169.1"/>
    <property type="molecule type" value="Genomic_DNA"/>
</dbReference>
<dbReference type="RefSeq" id="NP_597534.1">
    <property type="nucleotide sequence ID" value="NM_001040898.1"/>
</dbReference>
<dbReference type="PDB" id="7QEP">
    <property type="method" value="EM"/>
    <property type="resolution" value="2.70 A"/>
    <property type="chains" value="O1=1-111"/>
</dbReference>
<dbReference type="PDBsum" id="7QEP"/>
<dbReference type="EMDB" id="EMD-13936"/>
<dbReference type="SMR" id="Q8SSC8"/>
<dbReference type="STRING" id="284813.Q8SSC8"/>
<dbReference type="GeneID" id="858696"/>
<dbReference type="KEGG" id="ecu:ECU03_0230"/>
<dbReference type="VEuPathDB" id="MicrosporidiaDB:ECU03_0230"/>
<dbReference type="HOGENOM" id="CLU_112570_1_3_1"/>
<dbReference type="InParanoid" id="Q8SSC8"/>
<dbReference type="OMA" id="EVWKQGI"/>
<dbReference type="OrthoDB" id="9739313at2759"/>
<dbReference type="Proteomes" id="UP000000819">
    <property type="component" value="Chromosome III"/>
</dbReference>
<dbReference type="GO" id="GO:1990904">
    <property type="term" value="C:ribonucleoprotein complex"/>
    <property type="evidence" value="ECO:0007669"/>
    <property type="project" value="UniProtKB-KW"/>
</dbReference>
<dbReference type="GO" id="GO:0005840">
    <property type="term" value="C:ribosome"/>
    <property type="evidence" value="ECO:0007669"/>
    <property type="project" value="UniProtKB-KW"/>
</dbReference>
<dbReference type="GO" id="GO:0003735">
    <property type="term" value="F:structural constituent of ribosome"/>
    <property type="evidence" value="ECO:0007669"/>
    <property type="project" value="InterPro"/>
</dbReference>
<dbReference type="GO" id="GO:0006412">
    <property type="term" value="P:translation"/>
    <property type="evidence" value="ECO:0007669"/>
    <property type="project" value="InterPro"/>
</dbReference>
<dbReference type="CDD" id="cd00463">
    <property type="entry name" value="Ribosomal_L31e"/>
    <property type="match status" value="1"/>
</dbReference>
<dbReference type="Gene3D" id="3.10.440.10">
    <property type="match status" value="1"/>
</dbReference>
<dbReference type="InterPro" id="IPR000054">
    <property type="entry name" value="Ribosomal_eL31"/>
</dbReference>
<dbReference type="InterPro" id="IPR023621">
    <property type="entry name" value="Ribosomal_eL31_dom_sf"/>
</dbReference>
<dbReference type="Pfam" id="PF01198">
    <property type="entry name" value="Ribosomal_L31e"/>
    <property type="match status" value="1"/>
</dbReference>
<dbReference type="SMART" id="SM01380">
    <property type="entry name" value="Ribosomal_L31e"/>
    <property type="match status" value="1"/>
</dbReference>
<dbReference type="SUPFAM" id="SSF54575">
    <property type="entry name" value="Ribosomal protein L31e"/>
    <property type="match status" value="1"/>
</dbReference>
<keyword id="KW-0002">3D-structure</keyword>
<keyword id="KW-1185">Reference proteome</keyword>
<keyword id="KW-0687">Ribonucleoprotein</keyword>
<keyword id="KW-0689">Ribosomal protein</keyword>
<name>RL31_ENCCU</name>
<sequence length="111" mass="13011">MWSKIEENQTVEMTVNLRRICSRLPWTKKASKVVRMLKREIQKHFREEIGVVVTNDLNNFLYSRGIKKIPNKVRVRVTKETSLKNAEENVLKTDLVVVGSFKNLKEVIVDQ</sequence>
<accession>Q8SSC8</accession>
<organism>
    <name type="scientific">Encephalitozoon cuniculi (strain GB-M1)</name>
    <name type="common">Microsporidian parasite</name>
    <dbReference type="NCBI Taxonomy" id="284813"/>
    <lineage>
        <taxon>Eukaryota</taxon>
        <taxon>Fungi</taxon>
        <taxon>Fungi incertae sedis</taxon>
        <taxon>Microsporidia</taxon>
        <taxon>Unikaryonidae</taxon>
        <taxon>Encephalitozoon</taxon>
    </lineage>
</organism>